<proteinExistence type="inferred from homology"/>
<organism>
    <name type="scientific">Streptococcus thermophilus (strain ATCC BAA-250 / LMG 18311)</name>
    <dbReference type="NCBI Taxonomy" id="264199"/>
    <lineage>
        <taxon>Bacteria</taxon>
        <taxon>Bacillati</taxon>
        <taxon>Bacillota</taxon>
        <taxon>Bacilli</taxon>
        <taxon>Lactobacillales</taxon>
        <taxon>Streptococcaceae</taxon>
        <taxon>Streptococcus</taxon>
    </lineage>
</organism>
<comment type="function">
    <text evidence="1">Produces ATP from ADP in the presence of a proton gradient across the membrane. The alpha chain is a regulatory subunit.</text>
</comment>
<comment type="catalytic activity">
    <reaction evidence="1">
        <text>ATP + H2O + 4 H(+)(in) = ADP + phosphate + 5 H(+)(out)</text>
        <dbReference type="Rhea" id="RHEA:57720"/>
        <dbReference type="ChEBI" id="CHEBI:15377"/>
        <dbReference type="ChEBI" id="CHEBI:15378"/>
        <dbReference type="ChEBI" id="CHEBI:30616"/>
        <dbReference type="ChEBI" id="CHEBI:43474"/>
        <dbReference type="ChEBI" id="CHEBI:456216"/>
        <dbReference type="EC" id="7.1.2.2"/>
    </reaction>
</comment>
<comment type="subunit">
    <text evidence="1">F-type ATPases have 2 components, CF(1) - the catalytic core - and CF(0) - the membrane proton channel. CF(1) has five subunits: alpha(3), beta(3), gamma(1), delta(1), epsilon(1). CF(0) has three main subunits: a(1), b(2) and c(9-12). The alpha and beta chains form an alternating ring which encloses part of the gamma chain. CF(1) is attached to CF(0) by a central stalk formed by the gamma and epsilon chains, while a peripheral stalk is formed by the delta and b chains.</text>
</comment>
<comment type="subcellular location">
    <subcellularLocation>
        <location evidence="1">Cell membrane</location>
        <topology evidence="1">Peripheral membrane protein</topology>
    </subcellularLocation>
</comment>
<comment type="similarity">
    <text evidence="1">Belongs to the ATPase alpha/beta chains family.</text>
</comment>
<reference key="1">
    <citation type="journal article" date="2004" name="Nat. Biotechnol.">
        <title>Complete sequence and comparative genome analysis of the dairy bacterium Streptococcus thermophilus.</title>
        <authorList>
            <person name="Bolotin A."/>
            <person name="Quinquis B."/>
            <person name="Renault P."/>
            <person name="Sorokin A."/>
            <person name="Ehrlich S.D."/>
            <person name="Kulakauskas S."/>
            <person name="Lapidus A."/>
            <person name="Goltsman E."/>
            <person name="Mazur M."/>
            <person name="Pusch G.D."/>
            <person name="Fonstein M."/>
            <person name="Overbeek R."/>
            <person name="Kyprides N."/>
            <person name="Purnelle B."/>
            <person name="Prozzi D."/>
            <person name="Ngui K."/>
            <person name="Masuy D."/>
            <person name="Hancy F."/>
            <person name="Burteau S."/>
            <person name="Boutry M."/>
            <person name="Delcour J."/>
            <person name="Goffeau A."/>
            <person name="Hols P."/>
        </authorList>
    </citation>
    <scope>NUCLEOTIDE SEQUENCE [LARGE SCALE GENOMIC DNA]</scope>
    <source>
        <strain>ATCC BAA-250 / LMG 18311</strain>
    </source>
</reference>
<sequence length="501" mass="54593">MAINAQEISALIKKQIENFQPNFDVTETGVVTYIGDGIARARGLDNAMSGELLEFSNGVFGMAQNLESNDVGIIILGDFYTIREGDEVKRTGKIMEVPVGEALIGRVVNPLGQPIDGLGDIKTTATRPVEAPAPGVMQRKSVSEPLQTGLKAVDALVPIGRGQRELIIGDRQTGKTSVAIDAILNQKGQDVICIYVAIGQKESTVRTQVESLRKHGALDYTIVVTASASQPSPLLYIAPYAGVAMAEEFMYNGKHVLIVYDDLSKQAVAYRELSLLLRRPPGREAYPGDVFYLHSRLLERSAKLSDDLGGGSITALPIIQTQAGDISAYIATNVISITDGQIFLQENLFNSGIRPAIDAGSSVSRVGGSAQIKAMKKVAGTLRLDLASYRELEAFTQFGSDLDAATQAKLNRGRRTVEVLKQPLHKPLPVEKQVLILYALTHGFLDSVPVDQILDFEEALYDYFDSHHEDIFETIRSTKDLPEEAVLNEAIQAFKDQSEYK</sequence>
<evidence type="ECO:0000255" key="1">
    <source>
        <dbReference type="HAMAP-Rule" id="MF_01346"/>
    </source>
</evidence>
<gene>
    <name evidence="1" type="primary">atpA</name>
    <name type="ordered locus">stu0482</name>
</gene>
<feature type="chain" id="PRO_0000238371" description="ATP synthase subunit alpha">
    <location>
        <begin position="1"/>
        <end position="501"/>
    </location>
</feature>
<feature type="binding site" evidence="1">
    <location>
        <begin position="169"/>
        <end position="176"/>
    </location>
    <ligand>
        <name>ATP</name>
        <dbReference type="ChEBI" id="CHEBI:30616"/>
    </ligand>
</feature>
<feature type="site" description="Required for activity" evidence="1">
    <location>
        <position position="362"/>
    </location>
</feature>
<name>ATPA_STRT2</name>
<accession>Q5M5J3</accession>
<protein>
    <recommendedName>
        <fullName evidence="1">ATP synthase subunit alpha</fullName>
        <ecNumber evidence="1">7.1.2.2</ecNumber>
    </recommendedName>
    <alternativeName>
        <fullName evidence="1">ATP synthase F1 sector subunit alpha</fullName>
    </alternativeName>
    <alternativeName>
        <fullName evidence="1">F-ATPase subunit alpha</fullName>
    </alternativeName>
</protein>
<keyword id="KW-0066">ATP synthesis</keyword>
<keyword id="KW-0067">ATP-binding</keyword>
<keyword id="KW-1003">Cell membrane</keyword>
<keyword id="KW-0139">CF(1)</keyword>
<keyword id="KW-0375">Hydrogen ion transport</keyword>
<keyword id="KW-0406">Ion transport</keyword>
<keyword id="KW-0472">Membrane</keyword>
<keyword id="KW-0547">Nucleotide-binding</keyword>
<keyword id="KW-1185">Reference proteome</keyword>
<keyword id="KW-1278">Translocase</keyword>
<keyword id="KW-0813">Transport</keyword>
<dbReference type="EC" id="7.1.2.2" evidence="1"/>
<dbReference type="EMBL" id="CP000023">
    <property type="protein sequence ID" value="AAV60192.1"/>
    <property type="molecule type" value="Genomic_DNA"/>
</dbReference>
<dbReference type="RefSeq" id="WP_011225596.1">
    <property type="nucleotide sequence ID" value="NC_006448.1"/>
</dbReference>
<dbReference type="SMR" id="Q5M5J3"/>
<dbReference type="STRING" id="264199.stu0482"/>
<dbReference type="GeneID" id="66898392"/>
<dbReference type="KEGG" id="stl:stu0482"/>
<dbReference type="eggNOG" id="COG0056">
    <property type="taxonomic scope" value="Bacteria"/>
</dbReference>
<dbReference type="HOGENOM" id="CLU_010091_2_1_9"/>
<dbReference type="Proteomes" id="UP000001170">
    <property type="component" value="Chromosome"/>
</dbReference>
<dbReference type="GO" id="GO:0005886">
    <property type="term" value="C:plasma membrane"/>
    <property type="evidence" value="ECO:0007669"/>
    <property type="project" value="UniProtKB-SubCell"/>
</dbReference>
<dbReference type="GO" id="GO:0045259">
    <property type="term" value="C:proton-transporting ATP synthase complex"/>
    <property type="evidence" value="ECO:0007669"/>
    <property type="project" value="UniProtKB-KW"/>
</dbReference>
<dbReference type="GO" id="GO:0043531">
    <property type="term" value="F:ADP binding"/>
    <property type="evidence" value="ECO:0007669"/>
    <property type="project" value="TreeGrafter"/>
</dbReference>
<dbReference type="GO" id="GO:0005524">
    <property type="term" value="F:ATP binding"/>
    <property type="evidence" value="ECO:0007669"/>
    <property type="project" value="UniProtKB-UniRule"/>
</dbReference>
<dbReference type="GO" id="GO:0046933">
    <property type="term" value="F:proton-transporting ATP synthase activity, rotational mechanism"/>
    <property type="evidence" value="ECO:0007669"/>
    <property type="project" value="UniProtKB-UniRule"/>
</dbReference>
<dbReference type="CDD" id="cd18113">
    <property type="entry name" value="ATP-synt_F1_alpha_C"/>
    <property type="match status" value="1"/>
</dbReference>
<dbReference type="CDD" id="cd18116">
    <property type="entry name" value="ATP-synt_F1_alpha_N"/>
    <property type="match status" value="1"/>
</dbReference>
<dbReference type="CDD" id="cd01132">
    <property type="entry name" value="F1-ATPase_alpha_CD"/>
    <property type="match status" value="1"/>
</dbReference>
<dbReference type="FunFam" id="1.20.150.20:FF:000001">
    <property type="entry name" value="ATP synthase subunit alpha"/>
    <property type="match status" value="1"/>
</dbReference>
<dbReference type="FunFam" id="2.40.30.20:FF:000001">
    <property type="entry name" value="ATP synthase subunit alpha"/>
    <property type="match status" value="1"/>
</dbReference>
<dbReference type="FunFam" id="3.40.50.300:FF:000002">
    <property type="entry name" value="ATP synthase subunit alpha"/>
    <property type="match status" value="1"/>
</dbReference>
<dbReference type="Gene3D" id="2.40.30.20">
    <property type="match status" value="1"/>
</dbReference>
<dbReference type="Gene3D" id="1.20.150.20">
    <property type="entry name" value="ATP synthase alpha/beta chain, C-terminal domain"/>
    <property type="match status" value="1"/>
</dbReference>
<dbReference type="Gene3D" id="3.40.50.300">
    <property type="entry name" value="P-loop containing nucleotide triphosphate hydrolases"/>
    <property type="match status" value="1"/>
</dbReference>
<dbReference type="HAMAP" id="MF_01346">
    <property type="entry name" value="ATP_synth_alpha_bact"/>
    <property type="match status" value="1"/>
</dbReference>
<dbReference type="InterPro" id="IPR023366">
    <property type="entry name" value="ATP_synth_asu-like_sf"/>
</dbReference>
<dbReference type="InterPro" id="IPR000793">
    <property type="entry name" value="ATP_synth_asu_C"/>
</dbReference>
<dbReference type="InterPro" id="IPR038376">
    <property type="entry name" value="ATP_synth_asu_C_sf"/>
</dbReference>
<dbReference type="InterPro" id="IPR033732">
    <property type="entry name" value="ATP_synth_F1_a_nt-bd_dom"/>
</dbReference>
<dbReference type="InterPro" id="IPR005294">
    <property type="entry name" value="ATP_synth_F1_asu"/>
</dbReference>
<dbReference type="InterPro" id="IPR004100">
    <property type="entry name" value="ATPase_F1/V1/A1_a/bsu_N"/>
</dbReference>
<dbReference type="InterPro" id="IPR036121">
    <property type="entry name" value="ATPase_F1/V1/A1_a/bsu_N_sf"/>
</dbReference>
<dbReference type="InterPro" id="IPR000194">
    <property type="entry name" value="ATPase_F1/V1/A1_a/bsu_nucl-bd"/>
</dbReference>
<dbReference type="InterPro" id="IPR027417">
    <property type="entry name" value="P-loop_NTPase"/>
</dbReference>
<dbReference type="NCBIfam" id="TIGR00962">
    <property type="entry name" value="atpA"/>
    <property type="match status" value="1"/>
</dbReference>
<dbReference type="NCBIfam" id="NF009884">
    <property type="entry name" value="PRK13343.1"/>
    <property type="match status" value="1"/>
</dbReference>
<dbReference type="PANTHER" id="PTHR48082">
    <property type="entry name" value="ATP SYNTHASE SUBUNIT ALPHA, MITOCHONDRIAL"/>
    <property type="match status" value="1"/>
</dbReference>
<dbReference type="PANTHER" id="PTHR48082:SF2">
    <property type="entry name" value="ATP SYNTHASE SUBUNIT ALPHA, MITOCHONDRIAL"/>
    <property type="match status" value="1"/>
</dbReference>
<dbReference type="Pfam" id="PF00006">
    <property type="entry name" value="ATP-synt_ab"/>
    <property type="match status" value="1"/>
</dbReference>
<dbReference type="Pfam" id="PF00306">
    <property type="entry name" value="ATP-synt_ab_C"/>
    <property type="match status" value="1"/>
</dbReference>
<dbReference type="Pfam" id="PF02874">
    <property type="entry name" value="ATP-synt_ab_N"/>
    <property type="match status" value="1"/>
</dbReference>
<dbReference type="PIRSF" id="PIRSF039088">
    <property type="entry name" value="F_ATPase_subunit_alpha"/>
    <property type="match status" value="1"/>
</dbReference>
<dbReference type="SUPFAM" id="SSF47917">
    <property type="entry name" value="C-terminal domain of alpha and beta subunits of F1 ATP synthase"/>
    <property type="match status" value="1"/>
</dbReference>
<dbReference type="SUPFAM" id="SSF50615">
    <property type="entry name" value="N-terminal domain of alpha and beta subunits of F1 ATP synthase"/>
    <property type="match status" value="1"/>
</dbReference>
<dbReference type="SUPFAM" id="SSF52540">
    <property type="entry name" value="P-loop containing nucleoside triphosphate hydrolases"/>
    <property type="match status" value="1"/>
</dbReference>